<gene>
    <name evidence="1" type="primary">psbU</name>
    <name type="ordered locus">PMT_0178</name>
</gene>
<feature type="signal peptide" evidence="1">
    <location>
        <begin position="1"/>
        <end position="29"/>
    </location>
</feature>
<feature type="chain" id="PRO_0000029601" description="Photosystem II extrinsic protein U">
    <location>
        <begin position="30"/>
        <end position="120"/>
    </location>
</feature>
<keyword id="KW-0249">Electron transport</keyword>
<keyword id="KW-0472">Membrane</keyword>
<keyword id="KW-0602">Photosynthesis</keyword>
<keyword id="KW-0604">Photosystem II</keyword>
<keyword id="KW-1185">Reference proteome</keyword>
<keyword id="KW-0732">Signal</keyword>
<keyword id="KW-0793">Thylakoid</keyword>
<keyword id="KW-0813">Transport</keyword>
<sequence>MKRLLSLLTGVLVMTGLLMALIFPQSAYANVSDDKLGDRGEKVDLNNSSVRAFRQFPGMFPTIAGKIVVGGPYASVSDASSVLDASQKSVFDKYKDNFTVTDQEIAVNEGFDRINDGQYR</sequence>
<organism>
    <name type="scientific">Prochlorococcus marinus (strain MIT 9313)</name>
    <dbReference type="NCBI Taxonomy" id="74547"/>
    <lineage>
        <taxon>Bacteria</taxon>
        <taxon>Bacillati</taxon>
        <taxon>Cyanobacteriota</taxon>
        <taxon>Cyanophyceae</taxon>
        <taxon>Synechococcales</taxon>
        <taxon>Prochlorococcaceae</taxon>
        <taxon>Prochlorococcus</taxon>
    </lineage>
</organism>
<reference key="1">
    <citation type="journal article" date="2003" name="Nature">
        <title>Genome divergence in two Prochlorococcus ecotypes reflects oceanic niche differentiation.</title>
        <authorList>
            <person name="Rocap G."/>
            <person name="Larimer F.W."/>
            <person name="Lamerdin J.E."/>
            <person name="Malfatti S."/>
            <person name="Chain P."/>
            <person name="Ahlgren N.A."/>
            <person name="Arellano A."/>
            <person name="Coleman M."/>
            <person name="Hauser L."/>
            <person name="Hess W.R."/>
            <person name="Johnson Z.I."/>
            <person name="Land M.L."/>
            <person name="Lindell D."/>
            <person name="Post A.F."/>
            <person name="Regala W."/>
            <person name="Shah M."/>
            <person name="Shaw S.L."/>
            <person name="Steglich C."/>
            <person name="Sullivan M.B."/>
            <person name="Ting C.S."/>
            <person name="Tolonen A."/>
            <person name="Webb E.A."/>
            <person name="Zinser E.R."/>
            <person name="Chisholm S.W."/>
        </authorList>
    </citation>
    <scope>NUCLEOTIDE SEQUENCE [LARGE SCALE GENOMIC DNA]</scope>
    <source>
        <strain>MIT 9313</strain>
    </source>
</reference>
<comment type="function">
    <text evidence="1">One of the extrinsic, lumenal subunits of photosystem II (PSII). PSII is a light-driven water plastoquinone oxidoreductase, using light energy to abstract electrons from H(2)O, generating a proton gradient subsequently used for ATP formation. The extrinsic proteins stabilize the structure of photosystem II oxygen-evolving complex (OEC), the ion environment of oxygen evolution and protect the OEC against heat-induced inactivation.</text>
</comment>
<comment type="subunit">
    <text evidence="1">PSII is composed of 1 copy each of membrane proteins PsbA, PsbB, PsbC, PsbD, PsbE, PsbF, PsbH, PsbI, PsbJ, PsbK, PsbL, PsbM, PsbT, PsbX, PsbY, Psb30/Ycf12, peripheral proteins PsbO, CyanoQ (PsbQ), PsbU, PsbV and a large number of cofactors. It forms dimeric complexes.</text>
</comment>
<comment type="subcellular location">
    <subcellularLocation>
        <location evidence="1">Cellular thylakoid membrane</location>
        <topology evidence="1">Peripheral membrane protein</topology>
        <orientation evidence="1">Lumenal side</orientation>
    </subcellularLocation>
</comment>
<comment type="similarity">
    <text evidence="1">Belongs to the PsbU family.</text>
</comment>
<protein>
    <recommendedName>
        <fullName evidence="1">Photosystem II extrinsic protein U</fullName>
        <shortName evidence="1">PSII-U</shortName>
        <shortName evidence="1">PsbU</shortName>
    </recommendedName>
    <alternativeName>
        <fullName evidence="1">Photosystem II 12 kDa extrinsic protein</fullName>
        <shortName evidence="1">PS II complex 12 kDa extrinsic protein</shortName>
    </alternativeName>
</protein>
<name>PSBU_PROMM</name>
<accession>Q7TV66</accession>
<evidence type="ECO:0000255" key="1">
    <source>
        <dbReference type="HAMAP-Rule" id="MF_00589"/>
    </source>
</evidence>
<dbReference type="EMBL" id="BX548175">
    <property type="protein sequence ID" value="CAE20353.1"/>
    <property type="molecule type" value="Genomic_DNA"/>
</dbReference>
<dbReference type="RefSeq" id="WP_011129557.1">
    <property type="nucleotide sequence ID" value="NC_005071.1"/>
</dbReference>
<dbReference type="SMR" id="Q7TV66"/>
<dbReference type="KEGG" id="pmt:PMT_0178"/>
<dbReference type="eggNOG" id="COG1555">
    <property type="taxonomic scope" value="Bacteria"/>
</dbReference>
<dbReference type="HOGENOM" id="CLU_141240_1_0_3"/>
<dbReference type="OrthoDB" id="463369at2"/>
<dbReference type="Proteomes" id="UP000001423">
    <property type="component" value="Chromosome"/>
</dbReference>
<dbReference type="GO" id="GO:0019898">
    <property type="term" value="C:extrinsic component of membrane"/>
    <property type="evidence" value="ECO:0007669"/>
    <property type="project" value="InterPro"/>
</dbReference>
<dbReference type="GO" id="GO:0009654">
    <property type="term" value="C:photosystem II oxygen evolving complex"/>
    <property type="evidence" value="ECO:0007669"/>
    <property type="project" value="InterPro"/>
</dbReference>
<dbReference type="GO" id="GO:0031676">
    <property type="term" value="C:plasma membrane-derived thylakoid membrane"/>
    <property type="evidence" value="ECO:0007669"/>
    <property type="project" value="UniProtKB-SubCell"/>
</dbReference>
<dbReference type="GO" id="GO:0015979">
    <property type="term" value="P:photosynthesis"/>
    <property type="evidence" value="ECO:0007669"/>
    <property type="project" value="UniProtKB-UniRule"/>
</dbReference>
<dbReference type="GO" id="GO:0042549">
    <property type="term" value="P:photosystem II stabilization"/>
    <property type="evidence" value="ECO:0007669"/>
    <property type="project" value="InterPro"/>
</dbReference>
<dbReference type="Gene3D" id="1.10.150.320">
    <property type="entry name" value="Photosystem II 12 kDa extrinsic protein"/>
    <property type="match status" value="1"/>
</dbReference>
<dbReference type="HAMAP" id="MF_00589">
    <property type="entry name" value="PSII_PsbU"/>
    <property type="match status" value="1"/>
</dbReference>
<dbReference type="InterPro" id="IPR010527">
    <property type="entry name" value="PSII_PsbU"/>
</dbReference>
<dbReference type="NCBIfam" id="NF002708">
    <property type="entry name" value="PRK02515.1"/>
    <property type="match status" value="1"/>
</dbReference>
<dbReference type="Pfam" id="PF06514">
    <property type="entry name" value="PsbU"/>
    <property type="match status" value="1"/>
</dbReference>
<dbReference type="SUPFAM" id="SSF81585">
    <property type="entry name" value="PsbU/PolX domain-like"/>
    <property type="match status" value="1"/>
</dbReference>
<proteinExistence type="inferred from homology"/>